<dbReference type="EMBL" id="CP000497">
    <property type="protein sequence ID" value="ABN65319.2"/>
    <property type="molecule type" value="Genomic_DNA"/>
</dbReference>
<dbReference type="RefSeq" id="XP_001383348.2">
    <property type="nucleotide sequence ID" value="XM_001383311.1"/>
</dbReference>
<dbReference type="SMR" id="A3LR41"/>
<dbReference type="FunCoup" id="A3LR41">
    <property type="interactions" value="63"/>
</dbReference>
<dbReference type="STRING" id="322104.A3LR41"/>
<dbReference type="GeneID" id="4838311"/>
<dbReference type="KEGG" id="pic:PICST_88189"/>
<dbReference type="eggNOG" id="KOG1974">
    <property type="taxonomic scope" value="Eukaryota"/>
</dbReference>
<dbReference type="HOGENOM" id="CLU_008440_0_0_1"/>
<dbReference type="InParanoid" id="A3LR41"/>
<dbReference type="OMA" id="VNHHRHT"/>
<dbReference type="OrthoDB" id="310853at2759"/>
<dbReference type="Proteomes" id="UP000002258">
    <property type="component" value="Chromosome 3"/>
</dbReference>
<dbReference type="GO" id="GO:0031298">
    <property type="term" value="C:replication fork protection complex"/>
    <property type="evidence" value="ECO:0007669"/>
    <property type="project" value="TreeGrafter"/>
</dbReference>
<dbReference type="GO" id="GO:0003677">
    <property type="term" value="F:DNA binding"/>
    <property type="evidence" value="ECO:0007669"/>
    <property type="project" value="TreeGrafter"/>
</dbReference>
<dbReference type="GO" id="GO:0006281">
    <property type="term" value="P:DNA repair"/>
    <property type="evidence" value="ECO:0007669"/>
    <property type="project" value="UniProtKB-KW"/>
</dbReference>
<dbReference type="GO" id="GO:0000076">
    <property type="term" value="P:DNA replication checkpoint signaling"/>
    <property type="evidence" value="ECO:0007669"/>
    <property type="project" value="TreeGrafter"/>
</dbReference>
<dbReference type="GO" id="GO:0051321">
    <property type="term" value="P:meiotic cell cycle"/>
    <property type="evidence" value="ECO:0007669"/>
    <property type="project" value="UniProtKB-KW"/>
</dbReference>
<dbReference type="GO" id="GO:0043111">
    <property type="term" value="P:replication fork arrest"/>
    <property type="evidence" value="ECO:0007669"/>
    <property type="project" value="TreeGrafter"/>
</dbReference>
<dbReference type="InterPro" id="IPR044998">
    <property type="entry name" value="Timeless"/>
</dbReference>
<dbReference type="InterPro" id="IPR006906">
    <property type="entry name" value="Timeless_N"/>
</dbReference>
<dbReference type="PANTHER" id="PTHR22940:SF4">
    <property type="entry name" value="PROTEIN TIMELESS HOMOLOG"/>
    <property type="match status" value="1"/>
</dbReference>
<dbReference type="PANTHER" id="PTHR22940">
    <property type="entry name" value="TIMEOUT/TIMELESS-2"/>
    <property type="match status" value="1"/>
</dbReference>
<dbReference type="Pfam" id="PF04821">
    <property type="entry name" value="TIMELESS"/>
    <property type="match status" value="1"/>
</dbReference>
<accession>A3LR41</accession>
<reference key="1">
    <citation type="journal article" date="2007" name="Nat. Biotechnol.">
        <title>Genome sequence of the lignocellulose-bioconverting and xylose-fermenting yeast Pichia stipitis.</title>
        <authorList>
            <person name="Jeffries T.W."/>
            <person name="Grigoriev I.V."/>
            <person name="Grimwood J."/>
            <person name="Laplaza J.M."/>
            <person name="Aerts A."/>
            <person name="Salamov A."/>
            <person name="Schmutz J."/>
            <person name="Lindquist E."/>
            <person name="Dehal P."/>
            <person name="Shapiro H."/>
            <person name="Jin Y.-S."/>
            <person name="Passoth V."/>
            <person name="Richardson P.M."/>
        </authorList>
    </citation>
    <scope>NUCLEOTIDE SEQUENCE [LARGE SCALE GENOMIC DNA]</scope>
    <source>
        <strain>ATCC 58785 / CBS 6054 / NBRC 10063 / NRRL Y-11545</strain>
    </source>
</reference>
<gene>
    <name type="primary">TOF1</name>
    <name type="ORF">PICST_88189</name>
</gene>
<feature type="chain" id="PRO_0000301747" description="Topoisomerase 1-associated factor 1">
    <location>
        <begin position="1"/>
        <end position="1256"/>
    </location>
</feature>
<feature type="region of interest" description="Disordered" evidence="2">
    <location>
        <begin position="26"/>
        <end position="58"/>
    </location>
</feature>
<feature type="region of interest" description="Disordered" evidence="2">
    <location>
        <begin position="695"/>
        <end position="725"/>
    </location>
</feature>
<feature type="region of interest" description="Disordered" evidence="2">
    <location>
        <begin position="1052"/>
        <end position="1121"/>
    </location>
</feature>
<feature type="region of interest" description="Disordered" evidence="2">
    <location>
        <begin position="1176"/>
        <end position="1256"/>
    </location>
</feature>
<feature type="compositionally biased region" description="Acidic residues" evidence="2">
    <location>
        <begin position="26"/>
        <end position="38"/>
    </location>
</feature>
<feature type="compositionally biased region" description="Basic and acidic residues" evidence="2">
    <location>
        <begin position="39"/>
        <end position="53"/>
    </location>
</feature>
<feature type="compositionally biased region" description="Basic residues" evidence="2">
    <location>
        <begin position="1060"/>
        <end position="1086"/>
    </location>
</feature>
<feature type="compositionally biased region" description="Basic and acidic residues" evidence="2">
    <location>
        <begin position="1097"/>
        <end position="1110"/>
    </location>
</feature>
<feature type="compositionally biased region" description="Basic and acidic residues" evidence="2">
    <location>
        <begin position="1179"/>
        <end position="1190"/>
    </location>
</feature>
<feature type="compositionally biased region" description="Acidic residues" evidence="2">
    <location>
        <begin position="1194"/>
        <end position="1204"/>
    </location>
</feature>
<feature type="compositionally biased region" description="Low complexity" evidence="2">
    <location>
        <begin position="1222"/>
        <end position="1231"/>
    </location>
</feature>
<protein>
    <recommendedName>
        <fullName>Topoisomerase 1-associated factor 1</fullName>
    </recommendedName>
</protein>
<comment type="function">
    <text evidence="1">Forms a fork protection complex (FPC) with CSM3 and which is required for chromosome segregation during meiosis and DNA damage repair. FPC coordinates leading and lagging strand synthesis and moves with the replication fork. FPC stabilizes replication forks in a configuration that is recognized by replication checkpoint sensors (By similarity).</text>
</comment>
<comment type="subunit">
    <text evidence="1">Component of the fork protection complex (FPC) consisting of TOF1 and CSM3.</text>
</comment>
<comment type="subcellular location">
    <subcellularLocation>
        <location evidence="1">Nucleus</location>
    </subcellularLocation>
</comment>
<comment type="similarity">
    <text evidence="3">Belongs to the timeless family.</text>
</comment>
<keyword id="KW-0131">Cell cycle</keyword>
<keyword id="KW-0227">DNA damage</keyword>
<keyword id="KW-0234">DNA repair</keyword>
<keyword id="KW-0236">DNA replication inhibitor</keyword>
<keyword id="KW-0469">Meiosis</keyword>
<keyword id="KW-0539">Nucleus</keyword>
<keyword id="KW-1185">Reference proteome</keyword>
<evidence type="ECO:0000250" key="1"/>
<evidence type="ECO:0000256" key="2">
    <source>
        <dbReference type="SAM" id="MobiDB-lite"/>
    </source>
</evidence>
<evidence type="ECO:0000305" key="3"/>
<organism>
    <name type="scientific">Scheffersomyces stipitis (strain ATCC 58785 / CBS 6054 / NBRC 10063 / NRRL Y-11545)</name>
    <name type="common">Yeast</name>
    <name type="synonym">Pichia stipitis</name>
    <dbReference type="NCBI Taxonomy" id="322104"/>
    <lineage>
        <taxon>Eukaryota</taxon>
        <taxon>Fungi</taxon>
        <taxon>Dikarya</taxon>
        <taxon>Ascomycota</taxon>
        <taxon>Saccharomycotina</taxon>
        <taxon>Pichiomycetes</taxon>
        <taxon>Debaryomycetaceae</taxon>
        <taxon>Scheffersomyces</taxon>
    </lineage>
</organism>
<name>TOF1_PICST</name>
<proteinExistence type="inferred from homology"/>
<sequence length="1256" mass="143745">MSVSDIETERTRYYDAYDADDAELDGFIVSDEENDNLENENRNERDPDSRNQDDVDEYGQPQIDRIRTMTEALAPNESQASKVLRAHISVLVSALGGPDHTSNISPPPYKLGHDALACLKDIKRWIKSVDDRQDSYQVALACAESGLVINDLIVILCQWDSKNKKKEDFRNKRTMEKIMLACLELLVLLTWSVELRPESSDKQKLLYYDVKKAQIKYKRAILTYNKGQTLKAVIRLVLPIISKERVDREPKDNAIMRLVLFFFRNILYVEPPSPSISKKSSKTIVVTDNMPEGVSYDDISLSATISAFSKNRVLMLFLTLSSGIGVDFDSRFLGPTLLECIHLLVRGVDPNDILKLKQMRIPTEINDPGNSSSPFHNVPPASSTTGLQLQDLLAKESKIKNSQTQSMSTRHGRFGSLLSIRGDHSMSFVVSGQEALINAGQTMQKLDRSKKWKNRSYFKYDSDEYTKSSNTTYMNYGGLVILHEFIESFLAGGCFNILIEKLSSVFSSSDSILEKEYETATFFLTIAWFFQYKREKTVLYSSGTTNLQPIGEEDDRNDFGSVGAALSQVNFILLVKYCVDSFSISPKRWSSLHVVLICLKELLEISNTLFTRSSSSAGDEEQNELDRELAEGIISHLLVTQDFLSILYHLPQTASRHSPEYLKVCISVVHILLKTLKNFAEEDVKLFIQTTRRNSKKKANKESNDQSDAVEQVDESDTEDKRTHARVTRERKINYERTEVKFFHQDTVSTYIEYLSRYEDLTHYEIKKCLTYFHRLFVVRKDFNGLYRLDFMQVLHKLRDYLPSQSNIRGQVDEFIYYFMKKFKASIERFPNPIEILFPRFEDAESKTYLATGELYIQTEREIRSANVKRFEPGKPLEFVRHFEDNEKYKILVSALYEQGLSNMLVCLVEDLQRIHGIKQLDEDVDEVLQLKEDFRQYVLTNSHLRLLLRTVGLIPGYSLSQECQVPSKLTSSDIDSAITLIKKWMGLQPATFEDGKDPSYFLRSTGDTVDRPIDYSDSEDDIAFEITPKDRPNESHYDMLTELDELERAISGAENREKGKARKRGNKSSSTIKKKSLQSRSRRPPRFNVDSDDESELRKEVKSSEFVHDSDDESDDEAFFEREERLRQMLNSSGGIVNAQQLSEFKKVWASLESTGGIATASQVVRAVESVANISDGVDTHSHQDDKSQPSDSENEDSSEEVSEVQIRKRLRIEDDENDSDNNVSENYVSAEEGEEATPTVKRKKRLVISDDEDE</sequence>